<proteinExistence type="inferred from homology"/>
<protein>
    <recommendedName>
        <fullName evidence="1">Chromosome partition protein MukF</fullName>
    </recommendedName>
</protein>
<keyword id="KW-0106">Calcium</keyword>
<keyword id="KW-0131">Cell cycle</keyword>
<keyword id="KW-0132">Cell division</keyword>
<keyword id="KW-0159">Chromosome partition</keyword>
<keyword id="KW-0963">Cytoplasm</keyword>
<keyword id="KW-0226">DNA condensation</keyword>
<gene>
    <name evidence="1" type="primary">mukF</name>
    <name type="ordered locus">ECUMN_1116</name>
</gene>
<sequence length="440" mass="50579">MSEFSQTVPELVAWARKNDFSISLPVDRLSFLLAVATLNGERLDGEMSEGELVDAFRHVSDAFEQTSETIGVRANNAINDMVRQRLLNRFTSEQAEGNAIYRLTPLGIGITDYYIRQREFSTLRLSMQLSIVAGELKRAADAAEEGGDEFHWHRNVYAPLKYSVAEIFDSIDLTQRLMDEQQQQVKDDIAQLLNKDWRAAISSCELLLSETSGTLRELQDTLEAAGDKLQANLLRIQDATMTHDDLHFVDRLVFDLQSKLDRIISWGQQSIDLWIGYDRHVHKFIRTAIDMDKNRVFAQRLRQSVQTYFDEPWALTYANADRLLDMRDEEMALRDEEVTGELPEDLEYEEFNEIREQLAAIIEEQLAVYKTRQVPLDLGLVVREYLSQYPRARHFDVARIVIDQAVRLGVAQADFTGLPAKWQPINDYGAKVQAHVIDKY</sequence>
<comment type="function">
    <text evidence="1">Involved in chromosome condensation, segregation and cell cycle progression. May participate in facilitating chromosome segregation by condensation DNA from both sides of a centrally located replisome during cell division. Not required for mini-F plasmid partitioning. Probably acts via its interaction with MukB and MukE. Overexpression results in anucleate cells. It has a calcium binding activity.</text>
</comment>
<comment type="subunit">
    <text evidence="1">Interacts, and probably forms a ternary complex, with MukE and MukB via its C-terminal region. The complex formation is stimulated by calcium or magnesium. It is required for an interaction between MukE and MukB.</text>
</comment>
<comment type="subcellular location">
    <subcellularLocation>
        <location evidence="1">Cytoplasm</location>
        <location evidence="1">Nucleoid</location>
    </subcellularLocation>
    <text evidence="1">Restricted to the nucleoid region.</text>
</comment>
<comment type="similarity">
    <text evidence="1">Belongs to the MukF family.</text>
</comment>
<name>MUKF_ECOLU</name>
<reference key="1">
    <citation type="journal article" date="2009" name="PLoS Genet.">
        <title>Organised genome dynamics in the Escherichia coli species results in highly diverse adaptive paths.</title>
        <authorList>
            <person name="Touchon M."/>
            <person name="Hoede C."/>
            <person name="Tenaillon O."/>
            <person name="Barbe V."/>
            <person name="Baeriswyl S."/>
            <person name="Bidet P."/>
            <person name="Bingen E."/>
            <person name="Bonacorsi S."/>
            <person name="Bouchier C."/>
            <person name="Bouvet O."/>
            <person name="Calteau A."/>
            <person name="Chiapello H."/>
            <person name="Clermont O."/>
            <person name="Cruveiller S."/>
            <person name="Danchin A."/>
            <person name="Diard M."/>
            <person name="Dossat C."/>
            <person name="Karoui M.E."/>
            <person name="Frapy E."/>
            <person name="Garry L."/>
            <person name="Ghigo J.M."/>
            <person name="Gilles A.M."/>
            <person name="Johnson J."/>
            <person name="Le Bouguenec C."/>
            <person name="Lescat M."/>
            <person name="Mangenot S."/>
            <person name="Martinez-Jehanne V."/>
            <person name="Matic I."/>
            <person name="Nassif X."/>
            <person name="Oztas S."/>
            <person name="Petit M.A."/>
            <person name="Pichon C."/>
            <person name="Rouy Z."/>
            <person name="Ruf C.S."/>
            <person name="Schneider D."/>
            <person name="Tourret J."/>
            <person name="Vacherie B."/>
            <person name="Vallenet D."/>
            <person name="Medigue C."/>
            <person name="Rocha E.P.C."/>
            <person name="Denamur E."/>
        </authorList>
    </citation>
    <scope>NUCLEOTIDE SEQUENCE [LARGE SCALE GENOMIC DNA]</scope>
    <source>
        <strain>UMN026 / ExPEC</strain>
    </source>
</reference>
<organism>
    <name type="scientific">Escherichia coli O17:K52:H18 (strain UMN026 / ExPEC)</name>
    <dbReference type="NCBI Taxonomy" id="585056"/>
    <lineage>
        <taxon>Bacteria</taxon>
        <taxon>Pseudomonadati</taxon>
        <taxon>Pseudomonadota</taxon>
        <taxon>Gammaproteobacteria</taxon>
        <taxon>Enterobacterales</taxon>
        <taxon>Enterobacteriaceae</taxon>
        <taxon>Escherichia</taxon>
    </lineage>
</organism>
<evidence type="ECO:0000255" key="1">
    <source>
        <dbReference type="HAMAP-Rule" id="MF_01803"/>
    </source>
</evidence>
<dbReference type="EMBL" id="CU928163">
    <property type="protein sequence ID" value="CAR12325.1"/>
    <property type="molecule type" value="Genomic_DNA"/>
</dbReference>
<dbReference type="RefSeq" id="WP_001288850.1">
    <property type="nucleotide sequence ID" value="NC_011751.1"/>
</dbReference>
<dbReference type="RefSeq" id="YP_002411869.1">
    <property type="nucleotide sequence ID" value="NC_011751.1"/>
</dbReference>
<dbReference type="SMR" id="B7N389"/>
<dbReference type="STRING" id="585056.ECUMN_1116"/>
<dbReference type="GeneID" id="93776493"/>
<dbReference type="KEGG" id="eum:ECUMN_1116"/>
<dbReference type="PATRIC" id="fig|585056.7.peg.1310"/>
<dbReference type="HOGENOM" id="CLU_049853_0_0_6"/>
<dbReference type="Proteomes" id="UP000007097">
    <property type="component" value="Chromosome"/>
</dbReference>
<dbReference type="GO" id="GO:0005737">
    <property type="term" value="C:cytoplasm"/>
    <property type="evidence" value="ECO:0007669"/>
    <property type="project" value="UniProtKB-UniRule"/>
</dbReference>
<dbReference type="GO" id="GO:0009295">
    <property type="term" value="C:nucleoid"/>
    <property type="evidence" value="ECO:0007669"/>
    <property type="project" value="UniProtKB-SubCell"/>
</dbReference>
<dbReference type="GO" id="GO:0005509">
    <property type="term" value="F:calcium ion binding"/>
    <property type="evidence" value="ECO:0007669"/>
    <property type="project" value="UniProtKB-UniRule"/>
</dbReference>
<dbReference type="GO" id="GO:0051301">
    <property type="term" value="P:cell division"/>
    <property type="evidence" value="ECO:0007669"/>
    <property type="project" value="UniProtKB-KW"/>
</dbReference>
<dbReference type="GO" id="GO:0030261">
    <property type="term" value="P:chromosome condensation"/>
    <property type="evidence" value="ECO:0007669"/>
    <property type="project" value="UniProtKB-KW"/>
</dbReference>
<dbReference type="GO" id="GO:0007059">
    <property type="term" value="P:chromosome segregation"/>
    <property type="evidence" value="ECO:0007669"/>
    <property type="project" value="UniProtKB-UniRule"/>
</dbReference>
<dbReference type="GO" id="GO:0006260">
    <property type="term" value="P:DNA replication"/>
    <property type="evidence" value="ECO:0007669"/>
    <property type="project" value="UniProtKB-UniRule"/>
</dbReference>
<dbReference type="CDD" id="cd16337">
    <property type="entry name" value="MukF_C"/>
    <property type="match status" value="1"/>
</dbReference>
<dbReference type="CDD" id="cd16335">
    <property type="entry name" value="MukF_N"/>
    <property type="match status" value="1"/>
</dbReference>
<dbReference type="Gene3D" id="1.20.58.590">
    <property type="entry name" value="Chromosome partition protein MukF, middle domain"/>
    <property type="match status" value="1"/>
</dbReference>
<dbReference type="Gene3D" id="1.10.225.40">
    <property type="entry name" value="MukF, C-terminal domain"/>
    <property type="match status" value="1"/>
</dbReference>
<dbReference type="Gene3D" id="1.10.10.10">
    <property type="entry name" value="Winged helix-like DNA-binding domain superfamily/Winged helix DNA-binding domain"/>
    <property type="match status" value="1"/>
</dbReference>
<dbReference type="HAMAP" id="MF_01803">
    <property type="entry name" value="MukF"/>
    <property type="match status" value="1"/>
</dbReference>
<dbReference type="InterPro" id="IPR005582">
    <property type="entry name" value="Chromosome_partition_MukF"/>
</dbReference>
<dbReference type="InterPro" id="IPR033441">
    <property type="entry name" value="MukF_C"/>
</dbReference>
<dbReference type="InterPro" id="IPR038198">
    <property type="entry name" value="MukF_C_sf"/>
</dbReference>
<dbReference type="InterPro" id="IPR033440">
    <property type="entry name" value="MukF_M"/>
</dbReference>
<dbReference type="InterPro" id="IPR036141">
    <property type="entry name" value="MukF_M_sp"/>
</dbReference>
<dbReference type="InterPro" id="IPR033439">
    <property type="entry name" value="MukF_WHTH"/>
</dbReference>
<dbReference type="InterPro" id="IPR036388">
    <property type="entry name" value="WH-like_DNA-bd_sf"/>
</dbReference>
<dbReference type="InterPro" id="IPR036390">
    <property type="entry name" value="WH_DNA-bd_sf"/>
</dbReference>
<dbReference type="NCBIfam" id="NF003615">
    <property type="entry name" value="PRK05260.1"/>
    <property type="match status" value="1"/>
</dbReference>
<dbReference type="Pfam" id="PF03882">
    <property type="entry name" value="KicB"/>
    <property type="match status" value="1"/>
</dbReference>
<dbReference type="Pfam" id="PF17193">
    <property type="entry name" value="MukF_C"/>
    <property type="match status" value="1"/>
</dbReference>
<dbReference type="Pfam" id="PF17192">
    <property type="entry name" value="MukF_M"/>
    <property type="match status" value="1"/>
</dbReference>
<dbReference type="PIRSF" id="PIRSF018282">
    <property type="entry name" value="MukF"/>
    <property type="match status" value="1"/>
</dbReference>
<dbReference type="SUPFAM" id="SSF140570">
    <property type="entry name" value="MukF C-terminal domain-like"/>
    <property type="match status" value="1"/>
</dbReference>
<dbReference type="SUPFAM" id="SSF46785">
    <property type="entry name" value="Winged helix' DNA-binding domain"/>
    <property type="match status" value="1"/>
</dbReference>
<accession>B7N389</accession>
<feature type="chain" id="PRO_1000187506" description="Chromosome partition protein MukF">
    <location>
        <begin position="1"/>
        <end position="440"/>
    </location>
</feature>
<feature type="region of interest" description="Leucine-zipper">
    <location>
        <begin position="208"/>
        <end position="236"/>
    </location>
</feature>